<keyword id="KW-1185">Reference proteome</keyword>
<keyword id="KW-0732">Signal</keyword>
<sequence length="340" mass="37252">MGGARRLKLDGSIPNQLARAADAAVALERNGFDGGWTAEASHDPFLPLLLAAEHTSRLELGTNIAVAFARNPMIVANVGWDLQTYSKGRLILGLGTQIRPHIEKRFSMPWGHPARRMREFVAALRAIWLAWQDGTKLCFEGEFYTHKIMTPMFTPEPQPYPVPRVFIAAVGEAMTEMCGEVADGHLGHPMVSKRYLTEVSVPALLRGLARSGRDRSAFEVSCEVMVATGADDAELAAACTATRKQIAFYGSTPAYRKVLEQHGWGDLHPELHRLSKLGEWEAMGGLIDDEMLGAFAVVGPVDTIAGALRNRCEGVVDRVLPIFMAASQECINAALQDFRR</sequence>
<feature type="signal peptide" evidence="1">
    <location>
        <begin position="1"/>
        <end position="20"/>
    </location>
</feature>
<feature type="chain" id="PRO_0000014099" description="Uncharacterized protein Rv1360">
    <location>
        <begin position="21"/>
        <end position="340"/>
    </location>
</feature>
<gene>
    <name type="ordered locus">Rv1360</name>
    <name type="ORF">MTCY02B10.24</name>
</gene>
<protein>
    <recommendedName>
        <fullName>Uncharacterized protein Rv1360</fullName>
    </recommendedName>
</protein>
<organism>
    <name type="scientific">Mycobacterium tuberculosis (strain ATCC 25618 / H37Rv)</name>
    <dbReference type="NCBI Taxonomy" id="83332"/>
    <lineage>
        <taxon>Bacteria</taxon>
        <taxon>Bacillati</taxon>
        <taxon>Actinomycetota</taxon>
        <taxon>Actinomycetes</taxon>
        <taxon>Mycobacteriales</taxon>
        <taxon>Mycobacteriaceae</taxon>
        <taxon>Mycobacterium</taxon>
        <taxon>Mycobacterium tuberculosis complex</taxon>
    </lineage>
</organism>
<proteinExistence type="evidence at protein level"/>
<dbReference type="EMBL" id="AL123456">
    <property type="protein sequence ID" value="CCP44118.1"/>
    <property type="molecule type" value="Genomic_DNA"/>
</dbReference>
<dbReference type="PIR" id="G70741">
    <property type="entry name" value="G70741"/>
</dbReference>
<dbReference type="RefSeq" id="NP_215876.1">
    <property type="nucleotide sequence ID" value="NC_000962.3"/>
</dbReference>
<dbReference type="RefSeq" id="WP_003898842.1">
    <property type="nucleotide sequence ID" value="NZ_NVQJ01000031.1"/>
</dbReference>
<dbReference type="SMR" id="P9WM03"/>
<dbReference type="STRING" id="83332.Rv1360"/>
<dbReference type="PaxDb" id="83332-Rv1360"/>
<dbReference type="DNASU" id="886813"/>
<dbReference type="GeneID" id="886813"/>
<dbReference type="KEGG" id="mtu:Rv1360"/>
<dbReference type="KEGG" id="mtv:RVBD_1360"/>
<dbReference type="TubercuList" id="Rv1360"/>
<dbReference type="eggNOG" id="COG2141">
    <property type="taxonomic scope" value="Bacteria"/>
</dbReference>
<dbReference type="InParanoid" id="P9WM03"/>
<dbReference type="OrthoDB" id="3284378at2"/>
<dbReference type="PhylomeDB" id="P9WM03"/>
<dbReference type="Proteomes" id="UP000001584">
    <property type="component" value="Chromosome"/>
</dbReference>
<dbReference type="GO" id="GO:0016705">
    <property type="term" value="F:oxidoreductase activity, acting on paired donors, with incorporation or reduction of molecular oxygen"/>
    <property type="evidence" value="ECO:0007669"/>
    <property type="project" value="InterPro"/>
</dbReference>
<dbReference type="CDD" id="cd01097">
    <property type="entry name" value="Tetrahydromethanopterin_reductase"/>
    <property type="match status" value="1"/>
</dbReference>
<dbReference type="Gene3D" id="3.20.20.30">
    <property type="entry name" value="Luciferase-like domain"/>
    <property type="match status" value="1"/>
</dbReference>
<dbReference type="InterPro" id="IPR050564">
    <property type="entry name" value="F420-G6PD/mer"/>
</dbReference>
<dbReference type="InterPro" id="IPR019919">
    <property type="entry name" value="Lucif-like_OxRdtase_MSMEG_2256"/>
</dbReference>
<dbReference type="InterPro" id="IPR011251">
    <property type="entry name" value="Luciferase-like_dom"/>
</dbReference>
<dbReference type="InterPro" id="IPR036661">
    <property type="entry name" value="Luciferase-like_sf"/>
</dbReference>
<dbReference type="NCBIfam" id="TIGR03617">
    <property type="entry name" value="F420_MSMEG_2256"/>
    <property type="match status" value="1"/>
</dbReference>
<dbReference type="PANTHER" id="PTHR43244">
    <property type="match status" value="1"/>
</dbReference>
<dbReference type="PANTHER" id="PTHR43244:SF2">
    <property type="entry name" value="CONSERVED HYPOTHETICAL ALANINE AND PROLINE-RICH PROTEIN"/>
    <property type="match status" value="1"/>
</dbReference>
<dbReference type="Pfam" id="PF00296">
    <property type="entry name" value="Bac_luciferase"/>
    <property type="match status" value="1"/>
</dbReference>
<dbReference type="SUPFAM" id="SSF51679">
    <property type="entry name" value="Bacterial luciferase-like"/>
    <property type="match status" value="1"/>
</dbReference>
<evidence type="ECO:0000255" key="1"/>
<reference key="1">
    <citation type="journal article" date="1998" name="Nature">
        <title>Deciphering the biology of Mycobacterium tuberculosis from the complete genome sequence.</title>
        <authorList>
            <person name="Cole S.T."/>
            <person name="Brosch R."/>
            <person name="Parkhill J."/>
            <person name="Garnier T."/>
            <person name="Churcher C.M."/>
            <person name="Harris D.E."/>
            <person name="Gordon S.V."/>
            <person name="Eiglmeier K."/>
            <person name="Gas S."/>
            <person name="Barry C.E. III"/>
            <person name="Tekaia F."/>
            <person name="Badcock K."/>
            <person name="Basham D."/>
            <person name="Brown D."/>
            <person name="Chillingworth T."/>
            <person name="Connor R."/>
            <person name="Davies R.M."/>
            <person name="Devlin K."/>
            <person name="Feltwell T."/>
            <person name="Gentles S."/>
            <person name="Hamlin N."/>
            <person name="Holroyd S."/>
            <person name="Hornsby T."/>
            <person name="Jagels K."/>
            <person name="Krogh A."/>
            <person name="McLean J."/>
            <person name="Moule S."/>
            <person name="Murphy L.D."/>
            <person name="Oliver S."/>
            <person name="Osborne J."/>
            <person name="Quail M.A."/>
            <person name="Rajandream M.A."/>
            <person name="Rogers J."/>
            <person name="Rutter S."/>
            <person name="Seeger K."/>
            <person name="Skelton S."/>
            <person name="Squares S."/>
            <person name="Squares R."/>
            <person name="Sulston J.E."/>
            <person name="Taylor K."/>
            <person name="Whitehead S."/>
            <person name="Barrell B.G."/>
        </authorList>
    </citation>
    <scope>NUCLEOTIDE SEQUENCE [LARGE SCALE GENOMIC DNA]</scope>
    <source>
        <strain>ATCC 25618 / H37Rv</strain>
    </source>
</reference>
<reference key="2">
    <citation type="journal article" date="2008" name="BMC Syst. Biol.">
        <title>targetTB: a target identification pipeline for Mycobacterium tuberculosis through an interactome, reactome and genome-scale structural analysis.</title>
        <authorList>
            <person name="Raman K."/>
            <person name="Yeturu K."/>
            <person name="Chandra N."/>
        </authorList>
    </citation>
    <scope>IDENTIFICATION AS A DRUG TARGET [LARGE SCALE ANALYSIS]</scope>
</reference>
<reference key="3">
    <citation type="journal article" date="2011" name="Mol. Cell. Proteomics">
        <title>Proteogenomic analysis of Mycobacterium tuberculosis by high resolution mass spectrometry.</title>
        <authorList>
            <person name="Kelkar D.S."/>
            <person name="Kumar D."/>
            <person name="Kumar P."/>
            <person name="Balakrishnan L."/>
            <person name="Muthusamy B."/>
            <person name="Yadav A.K."/>
            <person name="Shrivastava P."/>
            <person name="Marimuthu A."/>
            <person name="Anand S."/>
            <person name="Sundaram H."/>
            <person name="Kingsbury R."/>
            <person name="Harsha H.C."/>
            <person name="Nair B."/>
            <person name="Prasad T.S."/>
            <person name="Chauhan D.S."/>
            <person name="Katoch K."/>
            <person name="Katoch V.M."/>
            <person name="Kumar P."/>
            <person name="Chaerkady R."/>
            <person name="Ramachandran S."/>
            <person name="Dash D."/>
            <person name="Pandey A."/>
        </authorList>
    </citation>
    <scope>IDENTIFICATION BY MASS SPECTROMETRY [LARGE SCALE ANALYSIS]</scope>
    <source>
        <strain>ATCC 25618 / H37Rv</strain>
    </source>
</reference>
<comment type="miscellaneous">
    <text>Was identified as a high-confidence drug target.</text>
</comment>
<name>Y1360_MYCTU</name>
<accession>P9WM03</accession>
<accession>L0T9E5</accession>
<accession>P64831</accession>
<accession>Q11030</accession>